<feature type="chain" id="PRO_0000303238" description="Histamine H4 receptor">
    <location>
        <begin position="1"/>
        <end position="391"/>
    </location>
</feature>
<feature type="topological domain" description="Extracellular" evidence="2">
    <location>
        <begin position="1"/>
        <end position="19"/>
    </location>
</feature>
<feature type="transmembrane region" description="Helical; Name=1" evidence="2">
    <location>
        <begin position="20"/>
        <end position="40"/>
    </location>
</feature>
<feature type="topological domain" description="Cytoplasmic" evidence="2">
    <location>
        <begin position="41"/>
        <end position="52"/>
    </location>
</feature>
<feature type="transmembrane region" description="Helical; Name=2" evidence="2">
    <location>
        <begin position="53"/>
        <end position="73"/>
    </location>
</feature>
<feature type="topological domain" description="Extracellular" evidence="2">
    <location>
        <begin position="74"/>
        <end position="87"/>
    </location>
</feature>
<feature type="transmembrane region" description="Helical; Name=3" evidence="2">
    <location>
        <begin position="88"/>
        <end position="108"/>
    </location>
</feature>
<feature type="topological domain" description="Cytoplasmic" evidence="2">
    <location>
        <begin position="109"/>
        <end position="131"/>
    </location>
</feature>
<feature type="transmembrane region" description="Helical; Name=4" evidence="2">
    <location>
        <begin position="132"/>
        <end position="152"/>
    </location>
</feature>
<feature type="topological domain" description="Extracellular" evidence="2">
    <location>
        <begin position="153"/>
        <end position="174"/>
    </location>
</feature>
<feature type="transmembrane region" description="Helical; Name=5" evidence="2">
    <location>
        <begin position="175"/>
        <end position="195"/>
    </location>
</feature>
<feature type="topological domain" description="Cytoplasmic" evidence="2">
    <location>
        <begin position="196"/>
        <end position="306"/>
    </location>
</feature>
<feature type="transmembrane region" description="Helical; Name=6" evidence="2">
    <location>
        <begin position="307"/>
        <end position="327"/>
    </location>
</feature>
<feature type="topological domain" description="Extracellular" evidence="2">
    <location>
        <begin position="328"/>
        <end position="343"/>
    </location>
</feature>
<feature type="transmembrane region" description="Helical; Name=7" evidence="2">
    <location>
        <begin position="344"/>
        <end position="364"/>
    </location>
</feature>
<feature type="topological domain" description="Cytoplasmic" evidence="2">
    <location>
        <begin position="365"/>
        <end position="391"/>
    </location>
</feature>
<feature type="region of interest" description="Disordered" evidence="4">
    <location>
        <begin position="238"/>
        <end position="258"/>
    </location>
</feature>
<feature type="compositionally biased region" description="Basic and acidic residues" evidence="4">
    <location>
        <begin position="247"/>
        <end position="256"/>
    </location>
</feature>
<feature type="glycosylation site" description="N-linked (GlcNAc...) asparagine" evidence="2">
    <location>
        <position position="5"/>
    </location>
</feature>
<feature type="glycosylation site" description="N-linked (GlcNAc...) asparagine" evidence="2">
    <location>
        <position position="159"/>
    </location>
</feature>
<feature type="disulfide bond" evidence="3">
    <location>
        <begin position="87"/>
        <end position="166"/>
    </location>
</feature>
<reference key="1">
    <citation type="submission" date="2001-03" db="EMBL/GenBank/DDBJ databases">
        <title>Comparison of human, mouse, rat, and guinea pig histamine H4 receptor suggests substantial species variation.</title>
        <authorList>
            <person name="Liu C."/>
            <person name="Wilson S."/>
            <person name="Kuei C."/>
            <person name="Lovenberg T.W."/>
        </authorList>
    </citation>
    <scope>NUCLEOTIDE SEQUENCE [MRNA]</scope>
    <source>
        <strain>BALB/cJ</strain>
    </source>
</reference>
<dbReference type="EMBL" id="AF358859">
    <property type="protein sequence ID" value="AAK97380.1"/>
    <property type="molecule type" value="mRNA"/>
</dbReference>
<dbReference type="CCDS" id="CCDS29069.1"/>
<dbReference type="RefSeq" id="NP_694727.1">
    <property type="nucleotide sequence ID" value="NM_153087.2"/>
</dbReference>
<dbReference type="SMR" id="Q91ZY2"/>
<dbReference type="FunCoup" id="Q91ZY2">
    <property type="interactions" value="560"/>
</dbReference>
<dbReference type="STRING" id="10090.ENSMUSP00000041061"/>
<dbReference type="BindingDB" id="Q91ZY2"/>
<dbReference type="ChEMBL" id="CHEMBL5657"/>
<dbReference type="DrugCentral" id="Q91ZY2"/>
<dbReference type="GuidetoPHARMACOLOGY" id="265"/>
<dbReference type="GlyCosmos" id="Q91ZY2">
    <property type="glycosylation" value="2 sites, No reported glycans"/>
</dbReference>
<dbReference type="GlyGen" id="Q91ZY2">
    <property type="glycosylation" value="2 sites"/>
</dbReference>
<dbReference type="iPTMnet" id="Q91ZY2"/>
<dbReference type="PhosphoSitePlus" id="Q91ZY2"/>
<dbReference type="PaxDb" id="10090-ENSMUSP00000041061"/>
<dbReference type="ProteomicsDB" id="273045"/>
<dbReference type="Antibodypedia" id="7806">
    <property type="antibodies" value="282 antibodies from 30 providers"/>
</dbReference>
<dbReference type="DNASU" id="225192"/>
<dbReference type="Ensembl" id="ENSMUST00000041676.3">
    <property type="protein sequence ID" value="ENSMUSP00000041061.3"/>
    <property type="gene ID" value="ENSMUSG00000037346.6"/>
</dbReference>
<dbReference type="GeneID" id="225192"/>
<dbReference type="KEGG" id="mmu:225192"/>
<dbReference type="UCSC" id="uc008edb.1">
    <property type="organism name" value="mouse"/>
</dbReference>
<dbReference type="AGR" id="MGI:2429635"/>
<dbReference type="CTD" id="59340"/>
<dbReference type="MGI" id="MGI:2429635">
    <property type="gene designation" value="Hrh4"/>
</dbReference>
<dbReference type="VEuPathDB" id="HostDB:ENSMUSG00000037346"/>
<dbReference type="eggNOG" id="KOG3656">
    <property type="taxonomic scope" value="Eukaryota"/>
</dbReference>
<dbReference type="GeneTree" id="ENSGT00940000162118"/>
<dbReference type="HOGENOM" id="CLU_009579_11_2_1"/>
<dbReference type="InParanoid" id="Q91ZY2"/>
<dbReference type="OMA" id="CVFWLIT"/>
<dbReference type="OrthoDB" id="10071887at2759"/>
<dbReference type="PhylomeDB" id="Q91ZY2"/>
<dbReference type="TreeFam" id="TF351747"/>
<dbReference type="Reactome" id="R-MMU-390650">
    <property type="pathway name" value="Histamine receptors"/>
</dbReference>
<dbReference type="Reactome" id="R-MMU-418594">
    <property type="pathway name" value="G alpha (i) signalling events"/>
</dbReference>
<dbReference type="BioGRID-ORCS" id="225192">
    <property type="hits" value="4 hits in 79 CRISPR screens"/>
</dbReference>
<dbReference type="PRO" id="PR:Q91ZY2"/>
<dbReference type="Proteomes" id="UP000000589">
    <property type="component" value="Chromosome 18"/>
</dbReference>
<dbReference type="RNAct" id="Q91ZY2">
    <property type="molecule type" value="protein"/>
</dbReference>
<dbReference type="Bgee" id="ENSMUSG00000037346">
    <property type="expression patterns" value="Expressed in mesodermal cell in embryo and 5 other cell types or tissues"/>
</dbReference>
<dbReference type="ExpressionAtlas" id="Q91ZY2">
    <property type="expression patterns" value="baseline and differential"/>
</dbReference>
<dbReference type="GO" id="GO:0016020">
    <property type="term" value="C:membrane"/>
    <property type="evidence" value="ECO:0000314"/>
    <property type="project" value="MGI"/>
</dbReference>
<dbReference type="GO" id="GO:0005886">
    <property type="term" value="C:plasma membrane"/>
    <property type="evidence" value="ECO:0000305"/>
    <property type="project" value="MGI"/>
</dbReference>
<dbReference type="GO" id="GO:0004969">
    <property type="term" value="F:histamine receptor activity"/>
    <property type="evidence" value="ECO:0000314"/>
    <property type="project" value="MGI"/>
</dbReference>
<dbReference type="GO" id="GO:0006954">
    <property type="term" value="P:inflammatory response"/>
    <property type="evidence" value="ECO:0000304"/>
    <property type="project" value="MGI"/>
</dbReference>
<dbReference type="GO" id="GO:0007204">
    <property type="term" value="P:positive regulation of cytosolic calcium ion concentration"/>
    <property type="evidence" value="ECO:0007669"/>
    <property type="project" value="InterPro"/>
</dbReference>
<dbReference type="GO" id="GO:0043408">
    <property type="term" value="P:regulation of MAPK cascade"/>
    <property type="evidence" value="ECO:0007669"/>
    <property type="project" value="InterPro"/>
</dbReference>
<dbReference type="Gene3D" id="1.20.1070.10">
    <property type="entry name" value="Rhodopsin 7-helix transmembrane proteins"/>
    <property type="match status" value="1"/>
</dbReference>
<dbReference type="InterPro" id="IPR000276">
    <property type="entry name" value="GPCR_Rhodpsn"/>
</dbReference>
<dbReference type="InterPro" id="IPR017452">
    <property type="entry name" value="GPCR_Rhodpsn_7TM"/>
</dbReference>
<dbReference type="InterPro" id="IPR008102">
    <property type="entry name" value="Histamine_H4_rcpt"/>
</dbReference>
<dbReference type="PANTHER" id="PTHR24247">
    <property type="entry name" value="5-HYDROXYTRYPTAMINE RECEPTOR"/>
    <property type="match status" value="1"/>
</dbReference>
<dbReference type="PANTHER" id="PTHR24247:SF199">
    <property type="entry name" value="HISTAMINE H4 RECEPTOR"/>
    <property type="match status" value="1"/>
</dbReference>
<dbReference type="Pfam" id="PF00001">
    <property type="entry name" value="7tm_1"/>
    <property type="match status" value="1"/>
</dbReference>
<dbReference type="PRINTS" id="PR00237">
    <property type="entry name" value="GPCRRHODOPSN"/>
</dbReference>
<dbReference type="PRINTS" id="PR01726">
    <property type="entry name" value="HISTAMINEH4R"/>
</dbReference>
<dbReference type="SUPFAM" id="SSF81321">
    <property type="entry name" value="Family A G protein-coupled receptor-like"/>
    <property type="match status" value="1"/>
</dbReference>
<dbReference type="PROSITE" id="PS00237">
    <property type="entry name" value="G_PROTEIN_RECEP_F1_1"/>
    <property type="match status" value="1"/>
</dbReference>
<dbReference type="PROSITE" id="PS50262">
    <property type="entry name" value="G_PROTEIN_RECEP_F1_2"/>
    <property type="match status" value="1"/>
</dbReference>
<organism>
    <name type="scientific">Mus musculus</name>
    <name type="common">Mouse</name>
    <dbReference type="NCBI Taxonomy" id="10090"/>
    <lineage>
        <taxon>Eukaryota</taxon>
        <taxon>Metazoa</taxon>
        <taxon>Chordata</taxon>
        <taxon>Craniata</taxon>
        <taxon>Vertebrata</taxon>
        <taxon>Euteleostomi</taxon>
        <taxon>Mammalia</taxon>
        <taxon>Eutheria</taxon>
        <taxon>Euarchontoglires</taxon>
        <taxon>Glires</taxon>
        <taxon>Rodentia</taxon>
        <taxon>Myomorpha</taxon>
        <taxon>Muroidea</taxon>
        <taxon>Muridae</taxon>
        <taxon>Murinae</taxon>
        <taxon>Mus</taxon>
        <taxon>Mus</taxon>
    </lineage>
</organism>
<evidence type="ECO:0000250" key="1">
    <source>
        <dbReference type="UniProtKB" id="Q9H3N8"/>
    </source>
</evidence>
<evidence type="ECO:0000255" key="2"/>
<evidence type="ECO:0000255" key="3">
    <source>
        <dbReference type="PROSITE-ProRule" id="PRU00521"/>
    </source>
</evidence>
<evidence type="ECO:0000256" key="4">
    <source>
        <dbReference type="SAM" id="MobiDB-lite"/>
    </source>
</evidence>
<proteinExistence type="evidence at transcript level"/>
<comment type="function">
    <text evidence="1">The H4 subclass of histamine receptors could mediate the histamine signals in peripheral tissues. Displays a significant level of constitutive activity (spontaneous activity in the absence of agonist).</text>
</comment>
<comment type="subunit">
    <text evidence="1">Interacts with TSPAN4.</text>
</comment>
<comment type="subcellular location">
    <subcellularLocation>
        <location evidence="1">Cell membrane</location>
        <topology evidence="1">Multi-pass membrane protein</topology>
    </subcellularLocation>
</comment>
<comment type="similarity">
    <text evidence="3">Belongs to the G-protein coupled receptor 1 family.</text>
</comment>
<accession>Q91ZY2</accession>
<name>HRH4_MOUSE</name>
<gene>
    <name type="primary">Hrh4</name>
</gene>
<sequence>MSESNSTGILPPAAQVPLAFLMSSFAFAIMVGNAVVILAFVVDRNLRHRSNYFFLNLAISDFLVGLISIPLYIPHVLFNWNFGSGICMFWLITDYLLCTASVYNIVLISYDRYQSVSNAVSYRAQHTGIMKIVAQMVAVWILAFLVNGPMILASDSWKNSTNTKDCEPGFVTEWYILTITMLLEFLLPVISVAYFNVQIYWSLWKRRALSRCPSHAGFSTTSSSASGHLHRAGVACRTSNPGLKESAASRHSESPRRKSSILVSLRTHMNSSITAFKVGSFWRSESAALRQREYAELLRGRKLARSLAILLSAFAICWAPYCLFTIVLSTYPRTERPKSVWYSIAFWLQWFNSFVNPFLYPLCHRRFQKAFWKILCVTKQPALSQNQSVSS</sequence>
<protein>
    <recommendedName>
        <fullName>Histamine H4 receptor</fullName>
        <shortName>H4R</shortName>
        <shortName>HH4R</shortName>
    </recommendedName>
</protein>
<keyword id="KW-1003">Cell membrane</keyword>
<keyword id="KW-1015">Disulfide bond</keyword>
<keyword id="KW-0297">G-protein coupled receptor</keyword>
<keyword id="KW-0325">Glycoprotein</keyword>
<keyword id="KW-0472">Membrane</keyword>
<keyword id="KW-0675">Receptor</keyword>
<keyword id="KW-1185">Reference proteome</keyword>
<keyword id="KW-0807">Transducer</keyword>
<keyword id="KW-0812">Transmembrane</keyword>
<keyword id="KW-1133">Transmembrane helix</keyword>